<dbReference type="EC" id="2.3.3.13" evidence="1"/>
<dbReference type="EMBL" id="AL111168">
    <property type="protein sequence ID" value="CAL35813.1"/>
    <property type="molecule type" value="Genomic_DNA"/>
</dbReference>
<dbReference type="PIR" id="C81270">
    <property type="entry name" value="C81270"/>
</dbReference>
<dbReference type="RefSeq" id="WP_002853134.1">
    <property type="nucleotide sequence ID" value="NZ_SZUC01000002.1"/>
</dbReference>
<dbReference type="RefSeq" id="YP_002345085.1">
    <property type="nucleotide sequence ID" value="NC_002163.1"/>
</dbReference>
<dbReference type="SMR" id="Q9PLV9"/>
<dbReference type="STRING" id="192222.Cj1719c"/>
<dbReference type="PaxDb" id="192222-Cj1719c"/>
<dbReference type="EnsemblBacteria" id="CAL35813">
    <property type="protein sequence ID" value="CAL35813"/>
    <property type="gene ID" value="Cj1719c"/>
</dbReference>
<dbReference type="GeneID" id="905996"/>
<dbReference type="KEGG" id="cje:Cj1719c"/>
<dbReference type="PATRIC" id="fig|192222.6.peg.1693"/>
<dbReference type="eggNOG" id="COG0119">
    <property type="taxonomic scope" value="Bacteria"/>
</dbReference>
<dbReference type="HOGENOM" id="CLU_022158_0_1_7"/>
<dbReference type="OrthoDB" id="9803573at2"/>
<dbReference type="UniPathway" id="UPA00048">
    <property type="reaction ID" value="UER00070"/>
</dbReference>
<dbReference type="Proteomes" id="UP000000799">
    <property type="component" value="Chromosome"/>
</dbReference>
<dbReference type="GO" id="GO:0005829">
    <property type="term" value="C:cytosol"/>
    <property type="evidence" value="ECO:0007669"/>
    <property type="project" value="TreeGrafter"/>
</dbReference>
<dbReference type="GO" id="GO:0003852">
    <property type="term" value="F:2-isopropylmalate synthase activity"/>
    <property type="evidence" value="ECO:0007669"/>
    <property type="project" value="UniProtKB-UniRule"/>
</dbReference>
<dbReference type="GO" id="GO:0003985">
    <property type="term" value="F:acetyl-CoA C-acetyltransferase activity"/>
    <property type="evidence" value="ECO:0007669"/>
    <property type="project" value="UniProtKB-UniRule"/>
</dbReference>
<dbReference type="GO" id="GO:0030145">
    <property type="term" value="F:manganese ion binding"/>
    <property type="evidence" value="ECO:0007669"/>
    <property type="project" value="UniProtKB-UniRule"/>
</dbReference>
<dbReference type="GO" id="GO:0009098">
    <property type="term" value="P:L-leucine biosynthetic process"/>
    <property type="evidence" value="ECO:0007669"/>
    <property type="project" value="UniProtKB-UniRule"/>
</dbReference>
<dbReference type="CDD" id="cd07940">
    <property type="entry name" value="DRE_TIM_IPMS"/>
    <property type="match status" value="1"/>
</dbReference>
<dbReference type="FunFam" id="1.10.238.260:FF:000001">
    <property type="entry name" value="2-isopropylmalate synthase"/>
    <property type="match status" value="1"/>
</dbReference>
<dbReference type="FunFam" id="3.20.20.70:FF:000010">
    <property type="entry name" value="2-isopropylmalate synthase"/>
    <property type="match status" value="1"/>
</dbReference>
<dbReference type="Gene3D" id="1.10.238.260">
    <property type="match status" value="1"/>
</dbReference>
<dbReference type="Gene3D" id="3.30.160.270">
    <property type="match status" value="1"/>
</dbReference>
<dbReference type="Gene3D" id="3.20.20.70">
    <property type="entry name" value="Aldolase class I"/>
    <property type="match status" value="1"/>
</dbReference>
<dbReference type="HAMAP" id="MF_01025">
    <property type="entry name" value="LeuA_type1"/>
    <property type="match status" value="1"/>
</dbReference>
<dbReference type="InterPro" id="IPR050073">
    <property type="entry name" value="2-IPM_HCS-like"/>
</dbReference>
<dbReference type="InterPro" id="IPR013709">
    <property type="entry name" value="2-isopropylmalate_synth_dimer"/>
</dbReference>
<dbReference type="InterPro" id="IPR002034">
    <property type="entry name" value="AIPM/Hcit_synth_CS"/>
</dbReference>
<dbReference type="InterPro" id="IPR013785">
    <property type="entry name" value="Aldolase_TIM"/>
</dbReference>
<dbReference type="InterPro" id="IPR054691">
    <property type="entry name" value="LeuA/HCS_post-cat"/>
</dbReference>
<dbReference type="InterPro" id="IPR036230">
    <property type="entry name" value="LeuA_allosteric_dom_sf"/>
</dbReference>
<dbReference type="InterPro" id="IPR005671">
    <property type="entry name" value="LeuA_bact_synth"/>
</dbReference>
<dbReference type="InterPro" id="IPR000891">
    <property type="entry name" value="PYR_CT"/>
</dbReference>
<dbReference type="NCBIfam" id="TIGR00973">
    <property type="entry name" value="leuA_bact"/>
    <property type="match status" value="1"/>
</dbReference>
<dbReference type="NCBIfam" id="NF002084">
    <property type="entry name" value="PRK00915.1-1"/>
    <property type="match status" value="1"/>
</dbReference>
<dbReference type="NCBIfam" id="NF002086">
    <property type="entry name" value="PRK00915.1-3"/>
    <property type="match status" value="1"/>
</dbReference>
<dbReference type="PANTHER" id="PTHR10277:SF9">
    <property type="entry name" value="2-ISOPROPYLMALATE SYNTHASE 1, CHLOROPLASTIC-RELATED"/>
    <property type="match status" value="1"/>
</dbReference>
<dbReference type="PANTHER" id="PTHR10277">
    <property type="entry name" value="HOMOCITRATE SYNTHASE-RELATED"/>
    <property type="match status" value="1"/>
</dbReference>
<dbReference type="Pfam" id="PF22617">
    <property type="entry name" value="HCS_D2"/>
    <property type="match status" value="1"/>
</dbReference>
<dbReference type="Pfam" id="PF00682">
    <property type="entry name" value="HMGL-like"/>
    <property type="match status" value="1"/>
</dbReference>
<dbReference type="Pfam" id="PF08502">
    <property type="entry name" value="LeuA_dimer"/>
    <property type="match status" value="1"/>
</dbReference>
<dbReference type="SMART" id="SM00917">
    <property type="entry name" value="LeuA_dimer"/>
    <property type="match status" value="1"/>
</dbReference>
<dbReference type="SUPFAM" id="SSF110921">
    <property type="entry name" value="2-isopropylmalate synthase LeuA, allosteric (dimerisation) domain"/>
    <property type="match status" value="1"/>
</dbReference>
<dbReference type="SUPFAM" id="SSF51569">
    <property type="entry name" value="Aldolase"/>
    <property type="match status" value="1"/>
</dbReference>
<dbReference type="PROSITE" id="PS00815">
    <property type="entry name" value="AIPM_HOMOCIT_SYNTH_1"/>
    <property type="match status" value="1"/>
</dbReference>
<dbReference type="PROSITE" id="PS00816">
    <property type="entry name" value="AIPM_HOMOCIT_SYNTH_2"/>
    <property type="match status" value="1"/>
</dbReference>
<dbReference type="PROSITE" id="PS50991">
    <property type="entry name" value="PYR_CT"/>
    <property type="match status" value="1"/>
</dbReference>
<protein>
    <recommendedName>
        <fullName evidence="1">2-isopropylmalate synthase</fullName>
        <ecNumber evidence="1">2.3.3.13</ecNumber>
    </recommendedName>
    <alternativeName>
        <fullName evidence="1">Alpha-IPM synthase</fullName>
    </alternativeName>
    <alternativeName>
        <fullName evidence="1">Alpha-isopropylmalate synthase</fullName>
    </alternativeName>
</protein>
<evidence type="ECO:0000255" key="1">
    <source>
        <dbReference type="HAMAP-Rule" id="MF_01025"/>
    </source>
</evidence>
<proteinExistence type="inferred from homology"/>
<accession>Q9PLV9</accession>
<accession>Q0P7R2</accession>
<keyword id="KW-0028">Amino-acid biosynthesis</keyword>
<keyword id="KW-0100">Branched-chain amino acid biosynthesis</keyword>
<keyword id="KW-0963">Cytoplasm</keyword>
<keyword id="KW-0432">Leucine biosynthesis</keyword>
<keyword id="KW-0464">Manganese</keyword>
<keyword id="KW-0479">Metal-binding</keyword>
<keyword id="KW-1185">Reference proteome</keyword>
<keyword id="KW-0808">Transferase</keyword>
<comment type="function">
    <text evidence="1">Catalyzes the condensation of the acetyl group of acetyl-CoA with 3-methyl-2-oxobutanoate (2-ketoisovalerate) to form 3-carboxy-3-hydroxy-4-methylpentanoate (2-isopropylmalate).</text>
</comment>
<comment type="catalytic activity">
    <reaction evidence="1">
        <text>3-methyl-2-oxobutanoate + acetyl-CoA + H2O = (2S)-2-isopropylmalate + CoA + H(+)</text>
        <dbReference type="Rhea" id="RHEA:21524"/>
        <dbReference type="ChEBI" id="CHEBI:1178"/>
        <dbReference type="ChEBI" id="CHEBI:11851"/>
        <dbReference type="ChEBI" id="CHEBI:15377"/>
        <dbReference type="ChEBI" id="CHEBI:15378"/>
        <dbReference type="ChEBI" id="CHEBI:57287"/>
        <dbReference type="ChEBI" id="CHEBI:57288"/>
        <dbReference type="EC" id="2.3.3.13"/>
    </reaction>
</comment>
<comment type="cofactor">
    <cofactor evidence="1">
        <name>Mn(2+)</name>
        <dbReference type="ChEBI" id="CHEBI:29035"/>
    </cofactor>
</comment>
<comment type="pathway">
    <text evidence="1">Amino-acid biosynthesis; L-leucine biosynthesis; L-leucine from 3-methyl-2-oxobutanoate: step 1/4.</text>
</comment>
<comment type="subunit">
    <text evidence="1">Homodimer.</text>
</comment>
<comment type="subcellular location">
    <subcellularLocation>
        <location evidence="1">Cytoplasm</location>
    </subcellularLocation>
</comment>
<comment type="similarity">
    <text evidence="1">Belongs to the alpha-IPM synthase/homocitrate synthase family. LeuA type 1 subfamily.</text>
</comment>
<reference key="1">
    <citation type="journal article" date="2000" name="Nature">
        <title>The genome sequence of the food-borne pathogen Campylobacter jejuni reveals hypervariable sequences.</title>
        <authorList>
            <person name="Parkhill J."/>
            <person name="Wren B.W."/>
            <person name="Mungall K.L."/>
            <person name="Ketley J.M."/>
            <person name="Churcher C.M."/>
            <person name="Basham D."/>
            <person name="Chillingworth T."/>
            <person name="Davies R.M."/>
            <person name="Feltwell T."/>
            <person name="Holroyd S."/>
            <person name="Jagels K."/>
            <person name="Karlyshev A.V."/>
            <person name="Moule S."/>
            <person name="Pallen M.J."/>
            <person name="Penn C.W."/>
            <person name="Quail M.A."/>
            <person name="Rajandream M.A."/>
            <person name="Rutherford K.M."/>
            <person name="van Vliet A.H.M."/>
            <person name="Whitehead S."/>
            <person name="Barrell B.G."/>
        </authorList>
    </citation>
    <scope>NUCLEOTIDE SEQUENCE [LARGE SCALE GENOMIC DNA]</scope>
    <source>
        <strain>ATCC 700819 / NCTC 11168</strain>
    </source>
</reference>
<name>LEU1_CAMJE</name>
<feature type="chain" id="PRO_0000140346" description="2-isopropylmalate synthase">
    <location>
        <begin position="1"/>
        <end position="511"/>
    </location>
</feature>
<feature type="domain" description="Pyruvate carboxyltransferase" evidence="1">
    <location>
        <begin position="6"/>
        <end position="269"/>
    </location>
</feature>
<feature type="region of interest" description="Regulatory domain" evidence="1">
    <location>
        <begin position="394"/>
        <end position="511"/>
    </location>
</feature>
<feature type="binding site" evidence="1">
    <location>
        <position position="15"/>
    </location>
    <ligand>
        <name>Mn(2+)</name>
        <dbReference type="ChEBI" id="CHEBI:29035"/>
    </ligand>
</feature>
<feature type="binding site" evidence="1">
    <location>
        <position position="203"/>
    </location>
    <ligand>
        <name>Mn(2+)</name>
        <dbReference type="ChEBI" id="CHEBI:29035"/>
    </ligand>
</feature>
<feature type="binding site" evidence="1">
    <location>
        <position position="205"/>
    </location>
    <ligand>
        <name>Mn(2+)</name>
        <dbReference type="ChEBI" id="CHEBI:29035"/>
    </ligand>
</feature>
<feature type="binding site" evidence="1">
    <location>
        <position position="239"/>
    </location>
    <ligand>
        <name>Mn(2+)</name>
        <dbReference type="ChEBI" id="CHEBI:29035"/>
    </ligand>
</feature>
<gene>
    <name evidence="1" type="primary">leuA</name>
    <name type="ordered locus">Cj1719c</name>
</gene>
<sequence>MKDNKIIIFDTTLRDGEQALGSSLGINQKLQIALALENLGVDVIEAGFPVSSQGDFKAVQKIASKVKNSTICALSRALDKDIDMAYEALKVAKHFRIHTFIATSTLHMQDKLKKDFDEILSMAKRAIIRARSYTDDVEFSCEDAGRTPIDNLCFMVENAIKAGAKTINIPDTVGYTLPSEFANIIKILFNKVPNIDKAIISVHCHNDLGMATGNSLSAILQGARQIECTINGLGERAGNCALEEVVMAIKTRKDYLKGFYTDIKCENIFKTSKLVSAITNESIPSHKAIVGSNAFSHSSGIHQDGVLKNRQTYEIISPSAIGIHENRMLMTARSGRAMIKTCLENLGYDENTYNLDDVYERFLRLADKKGQVYDYDLEALMFLSYESEEENEFVLEKLSVISGNIPTACVCMRIKEELKTEACTGNGPVEAVFNCIARITNLKPALKAYSINAKSSGVDAQGQVDVDLEFKGRKFHGKGLSTDVIEASAQAFVSAYNAIYRSLKVEERKMA</sequence>
<organism>
    <name type="scientific">Campylobacter jejuni subsp. jejuni serotype O:2 (strain ATCC 700819 / NCTC 11168)</name>
    <dbReference type="NCBI Taxonomy" id="192222"/>
    <lineage>
        <taxon>Bacteria</taxon>
        <taxon>Pseudomonadati</taxon>
        <taxon>Campylobacterota</taxon>
        <taxon>Epsilonproteobacteria</taxon>
        <taxon>Campylobacterales</taxon>
        <taxon>Campylobacteraceae</taxon>
        <taxon>Campylobacter</taxon>
    </lineage>
</organism>